<feature type="chain" id="PRO_0000196276" description="Sensory rhodopsin-1">
    <location>
        <begin position="1"/>
        <end position="239"/>
    </location>
</feature>
<feature type="topological domain" description="Extracellular" evidence="1">
    <location>
        <begin position="1"/>
        <end position="3"/>
    </location>
</feature>
<feature type="transmembrane region" description="Helical; Name=Helix A" evidence="1">
    <location>
        <begin position="4"/>
        <end position="25"/>
    </location>
</feature>
<feature type="topological domain" description="Cytoplasmic" evidence="1">
    <location>
        <begin position="26"/>
        <end position="34"/>
    </location>
</feature>
<feature type="transmembrane region" description="Helical; Name=Helix B" evidence="1">
    <location>
        <begin position="35"/>
        <end position="56"/>
    </location>
</feature>
<feature type="topological domain" description="Extracellular" evidence="1">
    <location>
        <begin position="57"/>
        <end position="70"/>
    </location>
</feature>
<feature type="transmembrane region" description="Helical; Name=Helix C" evidence="1">
    <location>
        <begin position="71"/>
        <end position="92"/>
    </location>
</feature>
<feature type="topological domain" description="Cytoplasmic" evidence="1">
    <location>
        <begin position="93"/>
        <end position="95"/>
    </location>
</feature>
<feature type="transmembrane region" description="Helical; Name=Helix D" evidence="1">
    <location>
        <begin position="96"/>
        <end position="118"/>
    </location>
</feature>
<feature type="topological domain" description="Extracellular" evidence="1">
    <location>
        <begin position="119"/>
        <end position="122"/>
    </location>
</feature>
<feature type="transmembrane region" description="Helical; Name=Helix E" evidence="1">
    <location>
        <begin position="123"/>
        <end position="150"/>
    </location>
</feature>
<feature type="topological domain" description="Cytoplasmic" evidence="1">
    <location>
        <begin position="151"/>
        <end position="153"/>
    </location>
</feature>
<feature type="transmembrane region" description="Helical; Name=Helix F" evidence="1">
    <location>
        <begin position="154"/>
        <end position="181"/>
    </location>
</feature>
<feature type="topological domain" description="Extracellular" evidence="1">
    <location>
        <begin position="182"/>
        <end position="189"/>
    </location>
</feature>
<feature type="transmembrane region" description="Helical; Name=Helix G" evidence="1">
    <location>
        <begin position="190"/>
        <end position="222"/>
    </location>
</feature>
<feature type="topological domain" description="Cytoplasmic" evidence="1">
    <location>
        <begin position="223"/>
        <end position="239"/>
    </location>
</feature>
<feature type="modified residue" description="N6-(retinylidene)lysine">
    <location>
        <position position="205"/>
    </location>
</feature>
<gene>
    <name type="primary">sop1</name>
    <name type="synonym">sopI</name>
    <name type="ordered locus">VNG_1660G</name>
</gene>
<keyword id="KW-1003">Cell membrane</keyword>
<keyword id="KW-0157">Chromophore</keyword>
<keyword id="KW-0472">Membrane</keyword>
<keyword id="KW-0600">Photoreceptor protein</keyword>
<keyword id="KW-0675">Receptor</keyword>
<keyword id="KW-1185">Reference proteome</keyword>
<keyword id="KW-0681">Retinal protein</keyword>
<keyword id="KW-0716">Sensory transduction</keyword>
<keyword id="KW-0812">Transmembrane</keyword>
<keyword id="KW-1133">Transmembrane helix</keyword>
<name>BACS1_HALSA</name>
<comment type="function">
    <text evidence="1">Involved in the control of phototaxis. Mediates both photoattractant (in the orange light) and photophobic (in the near UV light) responses. The signal is then transmitted to the sensory rhodopsin I transducer (HTR-I) (By similarity).</text>
</comment>
<comment type="subunit">
    <text evidence="1">Interacts with HTR-I.</text>
</comment>
<comment type="subcellular location">
    <subcellularLocation>
        <location evidence="2">Cell membrane</location>
        <topology evidence="2">Multi-pass membrane protein</topology>
    </subcellularLocation>
</comment>
<comment type="similarity">
    <text evidence="3">Belongs to the archaeal/bacterial/fungal opsin family.</text>
</comment>
<reference key="1">
    <citation type="journal article" date="1992" name="Proc. Natl. Acad. Sci. U.S.A.">
        <title>Primary structure of an archaebacterial transducer, a methyl-accepting protein associated with sensory rhodopsin I.</title>
        <authorList>
            <person name="Yao V.J."/>
            <person name="Spudich J.L."/>
        </authorList>
    </citation>
    <scope>NUCLEOTIDE SEQUENCE [GENOMIC DNA]</scope>
    <source>
        <strain>Flx5R</strain>
    </source>
</reference>
<reference key="2">
    <citation type="journal article" date="2000" name="Proc. Natl. Acad. Sci. U.S.A.">
        <title>Genome sequence of Halobacterium species NRC-1.</title>
        <authorList>
            <person name="Ng W.V."/>
            <person name="Kennedy S.P."/>
            <person name="Mahairas G.G."/>
            <person name="Berquist B."/>
            <person name="Pan M."/>
            <person name="Shukla H.D."/>
            <person name="Lasky S.R."/>
            <person name="Baliga N.S."/>
            <person name="Thorsson V."/>
            <person name="Sbrogna J."/>
            <person name="Swartzell S."/>
            <person name="Weir D."/>
            <person name="Hall J."/>
            <person name="Dahl T.A."/>
            <person name="Welti R."/>
            <person name="Goo Y.A."/>
            <person name="Leithauser B."/>
            <person name="Keller K."/>
            <person name="Cruz R."/>
            <person name="Danson M.J."/>
            <person name="Hough D.W."/>
            <person name="Maddocks D.G."/>
            <person name="Jablonski P.E."/>
            <person name="Krebs M.P."/>
            <person name="Angevine C.M."/>
            <person name="Dale H."/>
            <person name="Isenbarger T.A."/>
            <person name="Peck R.F."/>
            <person name="Pohlschroder M."/>
            <person name="Spudich J.L."/>
            <person name="Jung K.-H."/>
            <person name="Alam M."/>
            <person name="Freitas T."/>
            <person name="Hou S."/>
            <person name="Daniels C.J."/>
            <person name="Dennis P.P."/>
            <person name="Omer A.D."/>
            <person name="Ebhardt H."/>
            <person name="Lowe T.M."/>
            <person name="Liang P."/>
            <person name="Riley M."/>
            <person name="Hood L."/>
            <person name="DasSarma S."/>
        </authorList>
    </citation>
    <scope>NUCLEOTIDE SEQUENCE [LARGE SCALE GENOMIC DNA]</scope>
    <source>
        <strain>ATCC 700922 / JCM 11081 / NRC-1</strain>
    </source>
</reference>
<reference key="3">
    <citation type="journal article" date="1991" name="Biochemistry">
        <title>Conformational changes in sensory rhodopsin I: similarities and differences with bacteriorhodopsin, halorhodopsin, and rhodopsin.</title>
        <authorList>
            <person name="Bosuche O."/>
            <person name="Spudich E.N."/>
            <person name="Pudich J.L."/>
            <person name="Rotschild K.J."/>
        </authorList>
    </citation>
    <scope>SPECTROSCOPY</scope>
    <scope>SUBCELLULAR LOCATION</scope>
    <source>
        <strain>Flx5R</strain>
    </source>
</reference>
<reference key="4">
    <citation type="journal article" date="1997" name="Protein Eng.">
        <title>Three-dimensional model of sensory rhodopsin I reveals important restraints between the protein and the chromophore.</title>
        <authorList>
            <person name="Lin S.L."/>
            <person name="Yan B."/>
        </authorList>
    </citation>
    <scope>3D-STRUCTURE MODELING</scope>
</reference>
<evidence type="ECO:0000250" key="1"/>
<evidence type="ECO:0000269" key="2">
    <source>
    </source>
</evidence>
<evidence type="ECO:0000305" key="3"/>
<sequence>MDAVATAYLGGAVALIVGVAFVWLLYRSLDGSPHQSALAPLAIIPVFAGLSYVGMAYDIGTVIVNGNQIVGLRYIDWLVTTPILVGYVGYAAGASRRSIIGVMVADALMIAVGAGAVVTDGTLKWALFGVSSIFHLSLFAYLYVIFPRVVPDVPEQIGLFNLLKNHIGLLWLAYPLVWLFGPAGIGEATAAGVALTYVFLDVLAKVPYVYFFYARRRVFMHSESPPAPEQATVEATAAD</sequence>
<proteinExistence type="evidence at protein level"/>
<dbReference type="EMBL" id="L05603">
    <property type="protein sequence ID" value="AAA72316.1"/>
    <property type="molecule type" value="Genomic_DNA"/>
</dbReference>
<dbReference type="EMBL" id="AE004437">
    <property type="protein sequence ID" value="AAG19914.1"/>
    <property type="molecule type" value="Genomic_DNA"/>
</dbReference>
<dbReference type="PIR" id="F84318">
    <property type="entry name" value="F84318"/>
</dbReference>
<dbReference type="PIR" id="S09277">
    <property type="entry name" value="S09277"/>
</dbReference>
<dbReference type="RefSeq" id="WP_010903211.1">
    <property type="nucleotide sequence ID" value="NC_002607.1"/>
</dbReference>
<dbReference type="SMR" id="P0DMH8"/>
<dbReference type="STRING" id="64091.VNG_1660G"/>
<dbReference type="PaxDb" id="64091-VNG_1660G"/>
<dbReference type="GeneID" id="68694327"/>
<dbReference type="KEGG" id="hal:VNG_1660G"/>
<dbReference type="PATRIC" id="fig|64091.14.peg.1265"/>
<dbReference type="HOGENOM" id="CLU_054785_5_1_2"/>
<dbReference type="InParanoid" id="P0DMH8"/>
<dbReference type="OrthoDB" id="330248at2157"/>
<dbReference type="PhylomeDB" id="P0DMH8"/>
<dbReference type="Proteomes" id="UP000000554">
    <property type="component" value="Chromosome"/>
</dbReference>
<dbReference type="GO" id="GO:0005886">
    <property type="term" value="C:plasma membrane"/>
    <property type="evidence" value="ECO:0007669"/>
    <property type="project" value="UniProtKB-SubCell"/>
</dbReference>
<dbReference type="GO" id="GO:0005216">
    <property type="term" value="F:monoatomic ion channel activity"/>
    <property type="evidence" value="ECO:0007669"/>
    <property type="project" value="InterPro"/>
</dbReference>
<dbReference type="GO" id="GO:0009881">
    <property type="term" value="F:photoreceptor activity"/>
    <property type="evidence" value="ECO:0007669"/>
    <property type="project" value="UniProtKB-KW"/>
</dbReference>
<dbReference type="GO" id="GO:0007602">
    <property type="term" value="P:phototransduction"/>
    <property type="evidence" value="ECO:0007669"/>
    <property type="project" value="UniProtKB-KW"/>
</dbReference>
<dbReference type="CDD" id="cd15029">
    <property type="entry name" value="7tm_SRI_SRII"/>
    <property type="match status" value="1"/>
</dbReference>
<dbReference type="Gene3D" id="1.20.1070.10">
    <property type="entry name" value="Rhodopsin 7-helix transmembrane proteins"/>
    <property type="match status" value="1"/>
</dbReference>
<dbReference type="InterPro" id="IPR001425">
    <property type="entry name" value="Arc/bac/fun_rhodopsins"/>
</dbReference>
<dbReference type="InterPro" id="IPR018229">
    <property type="entry name" value="Rhodopsin_retinal_BS"/>
</dbReference>
<dbReference type="PANTHER" id="PTHR28286">
    <property type="match status" value="1"/>
</dbReference>
<dbReference type="PANTHER" id="PTHR28286:SF2">
    <property type="entry name" value="BACTERIORHODOPSIN _OPSIN, NOPA (EUROFUNG)"/>
    <property type="match status" value="1"/>
</dbReference>
<dbReference type="Pfam" id="PF01036">
    <property type="entry name" value="Bac_rhodopsin"/>
    <property type="match status" value="1"/>
</dbReference>
<dbReference type="PRINTS" id="PR00251">
    <property type="entry name" value="BACTRLOPSIN"/>
</dbReference>
<dbReference type="SMART" id="SM01021">
    <property type="entry name" value="Bac_rhodopsin"/>
    <property type="match status" value="1"/>
</dbReference>
<dbReference type="SUPFAM" id="SSF81321">
    <property type="entry name" value="Family A G protein-coupled receptor-like"/>
    <property type="match status" value="1"/>
</dbReference>
<dbReference type="PROSITE" id="PS00950">
    <property type="entry name" value="BACTERIAL_OPSIN_1"/>
    <property type="match status" value="1"/>
</dbReference>
<dbReference type="PROSITE" id="PS00327">
    <property type="entry name" value="BACTERIAL_OPSIN_RET"/>
    <property type="match status" value="1"/>
</dbReference>
<organism>
    <name type="scientific">Halobacterium salinarum (strain ATCC 700922 / JCM 11081 / NRC-1)</name>
    <name type="common">Halobacterium halobium</name>
    <dbReference type="NCBI Taxonomy" id="64091"/>
    <lineage>
        <taxon>Archaea</taxon>
        <taxon>Methanobacteriati</taxon>
        <taxon>Methanobacteriota</taxon>
        <taxon>Stenosarchaea group</taxon>
        <taxon>Halobacteria</taxon>
        <taxon>Halobacteriales</taxon>
        <taxon>Halobacteriaceae</taxon>
        <taxon>Halobacterium</taxon>
        <taxon>Halobacterium salinarum NRC-34001</taxon>
    </lineage>
</organism>
<protein>
    <recommendedName>
        <fullName>Sensory rhodopsin-1</fullName>
    </recommendedName>
    <alternativeName>
        <fullName>Sensory rhodopsin I</fullName>
        <shortName>SR-I</shortName>
    </alternativeName>
</protein>
<accession>P0DMH8</accession>
<accession>P25964</accession>
<accession>Q9HPF5</accession>